<name>RNC_XYLFA</name>
<reference key="1">
    <citation type="journal article" date="2000" name="Nature">
        <title>The genome sequence of the plant pathogen Xylella fastidiosa.</title>
        <authorList>
            <person name="Simpson A.J.G."/>
            <person name="Reinach F.C."/>
            <person name="Arruda P."/>
            <person name="Abreu F.A."/>
            <person name="Acencio M."/>
            <person name="Alvarenga R."/>
            <person name="Alves L.M.C."/>
            <person name="Araya J.E."/>
            <person name="Baia G.S."/>
            <person name="Baptista C.S."/>
            <person name="Barros M.H."/>
            <person name="Bonaccorsi E.D."/>
            <person name="Bordin S."/>
            <person name="Bove J.M."/>
            <person name="Briones M.R.S."/>
            <person name="Bueno M.R.P."/>
            <person name="Camargo A.A."/>
            <person name="Camargo L.E.A."/>
            <person name="Carraro D.M."/>
            <person name="Carrer H."/>
            <person name="Colauto N.B."/>
            <person name="Colombo C."/>
            <person name="Costa F.F."/>
            <person name="Costa M.C.R."/>
            <person name="Costa-Neto C.M."/>
            <person name="Coutinho L.L."/>
            <person name="Cristofani M."/>
            <person name="Dias-Neto E."/>
            <person name="Docena C."/>
            <person name="El-Dorry H."/>
            <person name="Facincani A.P."/>
            <person name="Ferreira A.J.S."/>
            <person name="Ferreira V.C.A."/>
            <person name="Ferro J.A."/>
            <person name="Fraga J.S."/>
            <person name="Franca S.C."/>
            <person name="Franco M.C."/>
            <person name="Frohme M."/>
            <person name="Furlan L.R."/>
            <person name="Garnier M."/>
            <person name="Goldman G.H."/>
            <person name="Goldman M.H.S."/>
            <person name="Gomes S.L."/>
            <person name="Gruber A."/>
            <person name="Ho P.L."/>
            <person name="Hoheisel J.D."/>
            <person name="Junqueira M.L."/>
            <person name="Kemper E.L."/>
            <person name="Kitajima J.P."/>
            <person name="Krieger J.E."/>
            <person name="Kuramae E.E."/>
            <person name="Laigret F."/>
            <person name="Lambais M.R."/>
            <person name="Leite L.C.C."/>
            <person name="Lemos E.G.M."/>
            <person name="Lemos M.V.F."/>
            <person name="Lopes S.A."/>
            <person name="Lopes C.R."/>
            <person name="Machado J.A."/>
            <person name="Machado M.A."/>
            <person name="Madeira A.M.B.N."/>
            <person name="Madeira H.M.F."/>
            <person name="Marino C.L."/>
            <person name="Marques M.V."/>
            <person name="Martins E.A.L."/>
            <person name="Martins E.M.F."/>
            <person name="Matsukuma A.Y."/>
            <person name="Menck C.F.M."/>
            <person name="Miracca E.C."/>
            <person name="Miyaki C.Y."/>
            <person name="Monteiro-Vitorello C.B."/>
            <person name="Moon D.H."/>
            <person name="Nagai M.A."/>
            <person name="Nascimento A.L.T.O."/>
            <person name="Netto L.E.S."/>
            <person name="Nhani A. Jr."/>
            <person name="Nobrega F.G."/>
            <person name="Nunes L.R."/>
            <person name="Oliveira M.A."/>
            <person name="de Oliveira M.C."/>
            <person name="de Oliveira R.C."/>
            <person name="Palmieri D.A."/>
            <person name="Paris A."/>
            <person name="Peixoto B.R."/>
            <person name="Pereira G.A.G."/>
            <person name="Pereira H.A. Jr."/>
            <person name="Pesquero J.B."/>
            <person name="Quaggio R.B."/>
            <person name="Roberto P.G."/>
            <person name="Rodrigues V."/>
            <person name="de Rosa A.J.M."/>
            <person name="de Rosa V.E. Jr."/>
            <person name="de Sa R.G."/>
            <person name="Santelli R.V."/>
            <person name="Sawasaki H.E."/>
            <person name="da Silva A.C.R."/>
            <person name="da Silva A.M."/>
            <person name="da Silva F.R."/>
            <person name="Silva W.A. Jr."/>
            <person name="da Silveira J.F."/>
            <person name="Silvestri M.L.Z."/>
            <person name="Siqueira W.J."/>
            <person name="de Souza A.A."/>
            <person name="de Souza A.P."/>
            <person name="Terenzi M.F."/>
            <person name="Truffi D."/>
            <person name="Tsai S.M."/>
            <person name="Tsuhako M.H."/>
            <person name="Vallada H."/>
            <person name="Van Sluys M.A."/>
            <person name="Verjovski-Almeida S."/>
            <person name="Vettore A.L."/>
            <person name="Zago M.A."/>
            <person name="Zatz M."/>
            <person name="Meidanis J."/>
            <person name="Setubal J.C."/>
        </authorList>
    </citation>
    <scope>NUCLEOTIDE SEQUENCE [LARGE SCALE GENOMIC DNA]</scope>
    <source>
        <strain>9a5c</strain>
    </source>
</reference>
<evidence type="ECO:0000255" key="1">
    <source>
        <dbReference type="HAMAP-Rule" id="MF_00104"/>
    </source>
</evidence>
<evidence type="ECO:0000256" key="2">
    <source>
        <dbReference type="SAM" id="MobiDB-lite"/>
    </source>
</evidence>
<evidence type="ECO:0000305" key="3"/>
<accession>Q9PB98</accession>
<keyword id="KW-0963">Cytoplasm</keyword>
<keyword id="KW-0255">Endonuclease</keyword>
<keyword id="KW-0378">Hydrolase</keyword>
<keyword id="KW-0460">Magnesium</keyword>
<keyword id="KW-0479">Metal-binding</keyword>
<keyword id="KW-0507">mRNA processing</keyword>
<keyword id="KW-0540">Nuclease</keyword>
<keyword id="KW-0694">RNA-binding</keyword>
<keyword id="KW-0698">rRNA processing</keyword>
<keyword id="KW-0699">rRNA-binding</keyword>
<keyword id="KW-0819">tRNA processing</keyword>
<protein>
    <recommendedName>
        <fullName evidence="1">Ribonuclease 3</fullName>
        <ecNumber evidence="1">3.1.26.3</ecNumber>
    </recommendedName>
    <alternativeName>
        <fullName evidence="1">Ribonuclease III</fullName>
        <shortName evidence="1">RNase III</shortName>
    </alternativeName>
</protein>
<gene>
    <name evidence="1" type="primary">rnc</name>
    <name type="ordered locus">XF_2246</name>
</gene>
<organism>
    <name type="scientific">Xylella fastidiosa (strain 9a5c)</name>
    <dbReference type="NCBI Taxonomy" id="160492"/>
    <lineage>
        <taxon>Bacteria</taxon>
        <taxon>Pseudomonadati</taxon>
        <taxon>Pseudomonadota</taxon>
        <taxon>Gammaproteobacteria</taxon>
        <taxon>Lysobacterales</taxon>
        <taxon>Lysobacteraceae</taxon>
        <taxon>Xylella</taxon>
    </lineage>
</organism>
<proteinExistence type="inferred from homology"/>
<comment type="function">
    <text evidence="1">Digests double-stranded RNA. Involved in the processing of primary rRNA transcript to yield the immediate precursors to the large and small rRNAs (23S and 16S). Processes some mRNAs, and tRNAs when they are encoded in the rRNA operon. Processes pre-crRNA and tracrRNA of type II CRISPR loci if present in the organism.</text>
</comment>
<comment type="catalytic activity">
    <reaction evidence="1">
        <text>Endonucleolytic cleavage to 5'-phosphomonoester.</text>
        <dbReference type="EC" id="3.1.26.3"/>
    </reaction>
</comment>
<comment type="cofactor">
    <cofactor evidence="1">
        <name>Mg(2+)</name>
        <dbReference type="ChEBI" id="CHEBI:18420"/>
    </cofactor>
</comment>
<comment type="subunit">
    <text evidence="1">Homodimer.</text>
</comment>
<comment type="subcellular location">
    <subcellularLocation>
        <location evidence="1">Cytoplasm</location>
    </subcellularLocation>
</comment>
<comment type="similarity">
    <text evidence="1">Belongs to the ribonuclease III family.</text>
</comment>
<comment type="sequence caution" evidence="3">
    <conflict type="erroneous initiation">
        <sequence resource="EMBL-CDS" id="AAF85045"/>
    </conflict>
    <text>Truncated N-terminus.</text>
</comment>
<feature type="chain" id="PRO_0000180459" description="Ribonuclease 3">
    <location>
        <begin position="1"/>
        <end position="227"/>
    </location>
</feature>
<feature type="domain" description="RNase III" evidence="1">
    <location>
        <begin position="6"/>
        <end position="128"/>
    </location>
</feature>
<feature type="domain" description="DRBM" evidence="1">
    <location>
        <begin position="155"/>
        <end position="225"/>
    </location>
</feature>
<feature type="region of interest" description="Disordered" evidence="2">
    <location>
        <begin position="203"/>
        <end position="227"/>
    </location>
</feature>
<feature type="compositionally biased region" description="Basic and acidic residues" evidence="2">
    <location>
        <begin position="203"/>
        <end position="212"/>
    </location>
</feature>
<feature type="active site" evidence="1">
    <location>
        <position position="45"/>
    </location>
</feature>
<feature type="active site" evidence="1">
    <location>
        <position position="117"/>
    </location>
</feature>
<feature type="binding site" evidence="1">
    <location>
        <position position="41"/>
    </location>
    <ligand>
        <name>Mg(2+)</name>
        <dbReference type="ChEBI" id="CHEBI:18420"/>
    </ligand>
</feature>
<feature type="binding site" evidence="1">
    <location>
        <position position="114"/>
    </location>
    <ligand>
        <name>Mg(2+)</name>
        <dbReference type="ChEBI" id="CHEBI:18420"/>
    </ligand>
</feature>
<feature type="binding site" evidence="1">
    <location>
        <position position="117"/>
    </location>
    <ligand>
        <name>Mg(2+)</name>
        <dbReference type="ChEBI" id="CHEBI:18420"/>
    </ligand>
</feature>
<dbReference type="EC" id="3.1.26.3" evidence="1"/>
<dbReference type="EMBL" id="AE003849">
    <property type="protein sequence ID" value="AAF85045.1"/>
    <property type="status" value="ALT_INIT"/>
    <property type="molecule type" value="Genomic_DNA"/>
</dbReference>
<dbReference type="PIR" id="F82581">
    <property type="entry name" value="F82581"/>
</dbReference>
<dbReference type="RefSeq" id="WP_023906310.1">
    <property type="nucleotide sequence ID" value="NC_002488.3"/>
</dbReference>
<dbReference type="SMR" id="Q9PB98"/>
<dbReference type="STRING" id="160492.XF_2246"/>
<dbReference type="KEGG" id="xfa:XF_2246"/>
<dbReference type="eggNOG" id="COG0571">
    <property type="taxonomic scope" value="Bacteria"/>
</dbReference>
<dbReference type="HOGENOM" id="CLU_000907_1_1_6"/>
<dbReference type="Proteomes" id="UP000000812">
    <property type="component" value="Chromosome"/>
</dbReference>
<dbReference type="GO" id="GO:0005737">
    <property type="term" value="C:cytoplasm"/>
    <property type="evidence" value="ECO:0007669"/>
    <property type="project" value="UniProtKB-SubCell"/>
</dbReference>
<dbReference type="GO" id="GO:0003725">
    <property type="term" value="F:double-stranded RNA binding"/>
    <property type="evidence" value="ECO:0007669"/>
    <property type="project" value="TreeGrafter"/>
</dbReference>
<dbReference type="GO" id="GO:0046872">
    <property type="term" value="F:metal ion binding"/>
    <property type="evidence" value="ECO:0007669"/>
    <property type="project" value="UniProtKB-KW"/>
</dbReference>
<dbReference type="GO" id="GO:0004525">
    <property type="term" value="F:ribonuclease III activity"/>
    <property type="evidence" value="ECO:0007669"/>
    <property type="project" value="UniProtKB-UniRule"/>
</dbReference>
<dbReference type="GO" id="GO:0019843">
    <property type="term" value="F:rRNA binding"/>
    <property type="evidence" value="ECO:0007669"/>
    <property type="project" value="UniProtKB-KW"/>
</dbReference>
<dbReference type="GO" id="GO:0006397">
    <property type="term" value="P:mRNA processing"/>
    <property type="evidence" value="ECO:0007669"/>
    <property type="project" value="UniProtKB-UniRule"/>
</dbReference>
<dbReference type="GO" id="GO:0010468">
    <property type="term" value="P:regulation of gene expression"/>
    <property type="evidence" value="ECO:0007669"/>
    <property type="project" value="TreeGrafter"/>
</dbReference>
<dbReference type="GO" id="GO:0006364">
    <property type="term" value="P:rRNA processing"/>
    <property type="evidence" value="ECO:0007669"/>
    <property type="project" value="UniProtKB-UniRule"/>
</dbReference>
<dbReference type="GO" id="GO:0008033">
    <property type="term" value="P:tRNA processing"/>
    <property type="evidence" value="ECO:0007669"/>
    <property type="project" value="UniProtKB-KW"/>
</dbReference>
<dbReference type="CDD" id="cd10845">
    <property type="entry name" value="DSRM_RNAse_III_family"/>
    <property type="match status" value="1"/>
</dbReference>
<dbReference type="CDD" id="cd00593">
    <property type="entry name" value="RIBOc"/>
    <property type="match status" value="1"/>
</dbReference>
<dbReference type="FunFam" id="1.10.1520.10:FF:000001">
    <property type="entry name" value="Ribonuclease 3"/>
    <property type="match status" value="1"/>
</dbReference>
<dbReference type="FunFam" id="3.30.160.20:FF:000003">
    <property type="entry name" value="Ribonuclease 3"/>
    <property type="match status" value="1"/>
</dbReference>
<dbReference type="Gene3D" id="3.30.160.20">
    <property type="match status" value="1"/>
</dbReference>
<dbReference type="Gene3D" id="1.10.1520.10">
    <property type="entry name" value="Ribonuclease III domain"/>
    <property type="match status" value="1"/>
</dbReference>
<dbReference type="HAMAP" id="MF_00104">
    <property type="entry name" value="RNase_III"/>
    <property type="match status" value="1"/>
</dbReference>
<dbReference type="InterPro" id="IPR014720">
    <property type="entry name" value="dsRBD_dom"/>
</dbReference>
<dbReference type="InterPro" id="IPR011907">
    <property type="entry name" value="RNase_III"/>
</dbReference>
<dbReference type="InterPro" id="IPR000999">
    <property type="entry name" value="RNase_III_dom"/>
</dbReference>
<dbReference type="InterPro" id="IPR036389">
    <property type="entry name" value="RNase_III_sf"/>
</dbReference>
<dbReference type="NCBIfam" id="TIGR02191">
    <property type="entry name" value="RNaseIII"/>
    <property type="match status" value="1"/>
</dbReference>
<dbReference type="PANTHER" id="PTHR11207:SF0">
    <property type="entry name" value="RIBONUCLEASE 3"/>
    <property type="match status" value="1"/>
</dbReference>
<dbReference type="PANTHER" id="PTHR11207">
    <property type="entry name" value="RIBONUCLEASE III"/>
    <property type="match status" value="1"/>
</dbReference>
<dbReference type="Pfam" id="PF00035">
    <property type="entry name" value="dsrm"/>
    <property type="match status" value="1"/>
</dbReference>
<dbReference type="Pfam" id="PF14622">
    <property type="entry name" value="Ribonucleas_3_3"/>
    <property type="match status" value="1"/>
</dbReference>
<dbReference type="SMART" id="SM00358">
    <property type="entry name" value="DSRM"/>
    <property type="match status" value="1"/>
</dbReference>
<dbReference type="SMART" id="SM00535">
    <property type="entry name" value="RIBOc"/>
    <property type="match status" value="1"/>
</dbReference>
<dbReference type="SUPFAM" id="SSF54768">
    <property type="entry name" value="dsRNA-binding domain-like"/>
    <property type="match status" value="1"/>
</dbReference>
<dbReference type="SUPFAM" id="SSF69065">
    <property type="entry name" value="RNase III domain-like"/>
    <property type="match status" value="1"/>
</dbReference>
<dbReference type="PROSITE" id="PS50137">
    <property type="entry name" value="DS_RBD"/>
    <property type="match status" value="1"/>
</dbReference>
<dbReference type="PROSITE" id="PS00517">
    <property type="entry name" value="RNASE_3_1"/>
    <property type="match status" value="1"/>
</dbReference>
<dbReference type="PROSITE" id="PS50142">
    <property type="entry name" value="RNASE_3_2"/>
    <property type="match status" value="1"/>
</dbReference>
<sequence length="227" mass="25190">MISSKASDYQQRIGYVFTDPSLLLQALRHCSAGTPHNERLEFLGDSVVNLLIAEALFQRWPRADEGALTRARSELVRETSLASIARTMQLGEQLILGPGELKSGGHRRDSILADAVEAVIAAIYLDADLATCRTVVLPWFETALTALPVGKPEKDPKTRLQEWLQARQWSLPVYELIFESGDPHTKHFRVSCTLGELKLRTEGEGSSRRLAEQDAASHAIDQLDSNK</sequence>